<proteinExistence type="inferred from homology"/>
<feature type="chain" id="PRO_0000089112" description="Actin-like protein ARP6">
    <location>
        <begin position="1"/>
        <end position="446"/>
    </location>
</feature>
<feature type="region of interest" description="Disordered" evidence="2">
    <location>
        <begin position="99"/>
        <end position="118"/>
    </location>
</feature>
<feature type="compositionally biased region" description="Low complexity" evidence="2">
    <location>
        <begin position="99"/>
        <end position="112"/>
    </location>
</feature>
<sequence length="446" mass="50916">MPEQLQKLVIDNGSYTIKAGFNTGDDDGNDTSTPIKVTNAISKTKDGIIHVGNQYLSHTNNFSGIQFRRPFEQNNLTSWETEKPIWDYTLDNLLLQTNDQSQSTSSSSSSSLQKHKRGKVIDPDDIHLILTEQPYQLPQLSTNTDQIIFEEYGFNKYYRCIAPSLVPFSVDTNQINDDFVLVIDSGFNSTWIVPMIYQQIHWPAVKKLPIGGNLLNGLLREMISFRHYDISEDPILINTIKESTCFISSSNYQQDLQHKHDLMCEFVLPDFKLTITGFVKNENSMSSQKLPNDTQVLKLYDERFTVPETYFHPEIIFDNNRTTASSSLLNNAPFKNLTDLIVESIMACPSITQPLLSANICLSGGSTNIPNFKTRLIGELRKELPSNWKVNIFDKQYDINRDELSWYGGINLSNESELLQEISISKKDYFEHGANWCQQQFGFKNV</sequence>
<evidence type="ECO:0000250" key="1"/>
<evidence type="ECO:0000256" key="2">
    <source>
        <dbReference type="SAM" id="MobiDB-lite"/>
    </source>
</evidence>
<evidence type="ECO:0000305" key="3"/>
<keyword id="KW-0010">Activator</keyword>
<keyword id="KW-0156">Chromatin regulator</keyword>
<keyword id="KW-0963">Cytoplasm</keyword>
<keyword id="KW-0206">Cytoskeleton</keyword>
<keyword id="KW-0539">Nucleus</keyword>
<keyword id="KW-1185">Reference proteome</keyword>
<keyword id="KW-0804">Transcription</keyword>
<keyword id="KW-0805">Transcription regulation</keyword>
<accession>Q5AP59</accession>
<accession>A0A1D8PET8</accession>
<name>ARP6_CANAL</name>
<protein>
    <recommendedName>
        <fullName>Actin-like protein ARP6</fullName>
    </recommendedName>
</protein>
<comment type="function">
    <text evidence="1">Component of the SWR1 complex which mediates the ATP-dependent exchange of histone H2A for the H2A variant HZT1 leading to transcriptional regulation of selected genes by chromatin remodeling. Involved in chromosome stability (By similarity).</text>
</comment>
<comment type="subunit">
    <text evidence="1">Component of the SWR1 chromatin remodeling complex.</text>
</comment>
<comment type="subcellular location">
    <subcellularLocation>
        <location evidence="1">Cytoplasm</location>
    </subcellularLocation>
    <subcellularLocation>
        <location evidence="1">Cytoplasm</location>
        <location evidence="1">Cytoskeleton</location>
    </subcellularLocation>
    <subcellularLocation>
        <location evidence="1">Nucleus</location>
    </subcellularLocation>
</comment>
<comment type="similarity">
    <text evidence="3">Belongs to the actin family. ARP6 subfamily.</text>
</comment>
<organism>
    <name type="scientific">Candida albicans (strain SC5314 / ATCC MYA-2876)</name>
    <name type="common">Yeast</name>
    <dbReference type="NCBI Taxonomy" id="237561"/>
    <lineage>
        <taxon>Eukaryota</taxon>
        <taxon>Fungi</taxon>
        <taxon>Dikarya</taxon>
        <taxon>Ascomycota</taxon>
        <taxon>Saccharomycotina</taxon>
        <taxon>Pichiomycetes</taxon>
        <taxon>Debaryomycetaceae</taxon>
        <taxon>Candida/Lodderomyces clade</taxon>
        <taxon>Candida</taxon>
    </lineage>
</organism>
<reference key="1">
    <citation type="journal article" date="2004" name="Proc. Natl. Acad. Sci. U.S.A.">
        <title>The diploid genome sequence of Candida albicans.</title>
        <authorList>
            <person name="Jones T."/>
            <person name="Federspiel N.A."/>
            <person name="Chibana H."/>
            <person name="Dungan J."/>
            <person name="Kalman S."/>
            <person name="Magee B.B."/>
            <person name="Newport G."/>
            <person name="Thorstenson Y.R."/>
            <person name="Agabian N."/>
            <person name="Magee P.T."/>
            <person name="Davis R.W."/>
            <person name="Scherer S."/>
        </authorList>
    </citation>
    <scope>NUCLEOTIDE SEQUENCE [LARGE SCALE GENOMIC DNA]</scope>
    <source>
        <strain>SC5314 / ATCC MYA-2876</strain>
    </source>
</reference>
<reference key="2">
    <citation type="journal article" date="2007" name="Genome Biol.">
        <title>Assembly of the Candida albicans genome into sixteen supercontigs aligned on the eight chromosomes.</title>
        <authorList>
            <person name="van het Hoog M."/>
            <person name="Rast T.J."/>
            <person name="Martchenko M."/>
            <person name="Grindle S."/>
            <person name="Dignard D."/>
            <person name="Hogues H."/>
            <person name="Cuomo C."/>
            <person name="Berriman M."/>
            <person name="Scherer S."/>
            <person name="Magee B.B."/>
            <person name="Whiteway M."/>
            <person name="Chibana H."/>
            <person name="Nantel A."/>
            <person name="Magee P.T."/>
        </authorList>
    </citation>
    <scope>GENOME REANNOTATION</scope>
    <source>
        <strain>SC5314 / ATCC MYA-2876</strain>
    </source>
</reference>
<reference key="3">
    <citation type="journal article" date="2013" name="Genome Biol.">
        <title>Assembly of a phased diploid Candida albicans genome facilitates allele-specific measurements and provides a simple model for repeat and indel structure.</title>
        <authorList>
            <person name="Muzzey D."/>
            <person name="Schwartz K."/>
            <person name="Weissman J.S."/>
            <person name="Sherlock G."/>
        </authorList>
    </citation>
    <scope>NUCLEOTIDE SEQUENCE [LARGE SCALE GENOMIC DNA]</scope>
    <scope>GENOME REANNOTATION</scope>
    <source>
        <strain>SC5314 / ATCC MYA-2876</strain>
    </source>
</reference>
<dbReference type="EMBL" id="CP017623">
    <property type="protein sequence ID" value="AOW26663.1"/>
    <property type="molecule type" value="Genomic_DNA"/>
</dbReference>
<dbReference type="RefSeq" id="XP_723586.1">
    <property type="nucleotide sequence ID" value="XM_718493.1"/>
</dbReference>
<dbReference type="SMR" id="Q5AP59"/>
<dbReference type="FunCoup" id="Q5AP59">
    <property type="interactions" value="338"/>
</dbReference>
<dbReference type="STRING" id="237561.Q5AP59"/>
<dbReference type="EnsemblFungi" id="C1_10330C_A-T">
    <property type="protein sequence ID" value="C1_10330C_A-T-p1"/>
    <property type="gene ID" value="C1_10330C_A"/>
</dbReference>
<dbReference type="GeneID" id="3634908"/>
<dbReference type="KEGG" id="cal:CAALFM_C110330CA"/>
<dbReference type="CGD" id="CAL0000174064">
    <property type="gene designation" value="orf19.12369"/>
</dbReference>
<dbReference type="VEuPathDB" id="FungiDB:C1_10330C_A"/>
<dbReference type="eggNOG" id="KOG0680">
    <property type="taxonomic scope" value="Eukaryota"/>
</dbReference>
<dbReference type="HOGENOM" id="CLU_027965_1_1_1"/>
<dbReference type="InParanoid" id="Q5AP59"/>
<dbReference type="OMA" id="FFEEYEC"/>
<dbReference type="OrthoDB" id="6220758at2759"/>
<dbReference type="PRO" id="PR:Q5AP59"/>
<dbReference type="Proteomes" id="UP000000559">
    <property type="component" value="Chromosome 1"/>
</dbReference>
<dbReference type="GO" id="GO:0005737">
    <property type="term" value="C:cytoplasm"/>
    <property type="evidence" value="ECO:0007669"/>
    <property type="project" value="UniProtKB-SubCell"/>
</dbReference>
<dbReference type="GO" id="GO:0005856">
    <property type="term" value="C:cytoskeleton"/>
    <property type="evidence" value="ECO:0007669"/>
    <property type="project" value="UniProtKB-SubCell"/>
</dbReference>
<dbReference type="GO" id="GO:0000812">
    <property type="term" value="C:Swr1 complex"/>
    <property type="evidence" value="ECO:0000318"/>
    <property type="project" value="GO_Central"/>
</dbReference>
<dbReference type="GO" id="GO:0031491">
    <property type="term" value="F:nucleosome binding"/>
    <property type="evidence" value="ECO:0000318"/>
    <property type="project" value="GO_Central"/>
</dbReference>
<dbReference type="GO" id="GO:0006325">
    <property type="term" value="P:chromatin organization"/>
    <property type="evidence" value="ECO:0007669"/>
    <property type="project" value="UniProtKB-KW"/>
</dbReference>
<dbReference type="CDD" id="cd10210">
    <property type="entry name" value="ASKHA_NBD_Arp6"/>
    <property type="match status" value="1"/>
</dbReference>
<dbReference type="FunFam" id="3.90.640.10:FF:000040">
    <property type="entry name" value="Actin-like protein ARP6"/>
    <property type="match status" value="1"/>
</dbReference>
<dbReference type="Gene3D" id="3.30.420.40">
    <property type="match status" value="2"/>
</dbReference>
<dbReference type="Gene3D" id="3.90.640.10">
    <property type="entry name" value="Actin, Chain A, domain 4"/>
    <property type="match status" value="1"/>
</dbReference>
<dbReference type="InterPro" id="IPR004000">
    <property type="entry name" value="Actin"/>
</dbReference>
<dbReference type="InterPro" id="IPR043129">
    <property type="entry name" value="ATPase_NBD"/>
</dbReference>
<dbReference type="PANTHER" id="PTHR11937">
    <property type="entry name" value="ACTIN"/>
    <property type="match status" value="1"/>
</dbReference>
<dbReference type="Pfam" id="PF00022">
    <property type="entry name" value="Actin"/>
    <property type="match status" value="1"/>
</dbReference>
<dbReference type="SMART" id="SM00268">
    <property type="entry name" value="ACTIN"/>
    <property type="match status" value="1"/>
</dbReference>
<dbReference type="SUPFAM" id="SSF53067">
    <property type="entry name" value="Actin-like ATPase domain"/>
    <property type="match status" value="2"/>
</dbReference>
<gene>
    <name type="primary">ARP6</name>
    <name type="ordered locus">CAALFM_C110330CA</name>
    <name type="ORF">CaO19.12369</name>
    <name type="ORF">CaO19.4904</name>
</gene>